<organism>
    <name type="scientific">Parvibaculum lavamentivorans (strain DS-1 / DSM 13023 / NCIMB 13966)</name>
    <dbReference type="NCBI Taxonomy" id="402881"/>
    <lineage>
        <taxon>Bacteria</taxon>
        <taxon>Pseudomonadati</taxon>
        <taxon>Pseudomonadota</taxon>
        <taxon>Alphaproteobacteria</taxon>
        <taxon>Hyphomicrobiales</taxon>
        <taxon>Parvibaculaceae</taxon>
        <taxon>Parvibaculum</taxon>
    </lineage>
</organism>
<accession>A7HWQ3</accession>
<proteinExistence type="inferred from homology"/>
<evidence type="ECO:0000255" key="1">
    <source>
        <dbReference type="HAMAP-Rule" id="MF_00368"/>
    </source>
</evidence>
<evidence type="ECO:0000305" key="2"/>
<sequence length="123" mass="12681">MTDLAKIVEDLSNLTVLEAAELSKMLEEKWGVSAAAPVAVAAAGAAPAAAAEEQTEFDVILAAAGDKKIEVIKEVRAITGLGLKEAKDLVEGAPKTVKEAASKDEAAKIKAQLEKAGAKVELK</sequence>
<keyword id="KW-1185">Reference proteome</keyword>
<keyword id="KW-0687">Ribonucleoprotein</keyword>
<keyword id="KW-0689">Ribosomal protein</keyword>
<dbReference type="EMBL" id="CP000774">
    <property type="protein sequence ID" value="ABS64336.1"/>
    <property type="molecule type" value="Genomic_DNA"/>
</dbReference>
<dbReference type="RefSeq" id="WP_012111651.1">
    <property type="nucleotide sequence ID" value="NC_009719.1"/>
</dbReference>
<dbReference type="SMR" id="A7HWQ3"/>
<dbReference type="STRING" id="402881.Plav_2728"/>
<dbReference type="KEGG" id="pla:Plav_2728"/>
<dbReference type="eggNOG" id="COG0222">
    <property type="taxonomic scope" value="Bacteria"/>
</dbReference>
<dbReference type="HOGENOM" id="CLU_086499_3_0_5"/>
<dbReference type="OrthoDB" id="9811748at2"/>
<dbReference type="Proteomes" id="UP000006377">
    <property type="component" value="Chromosome"/>
</dbReference>
<dbReference type="GO" id="GO:0022625">
    <property type="term" value="C:cytosolic large ribosomal subunit"/>
    <property type="evidence" value="ECO:0007669"/>
    <property type="project" value="TreeGrafter"/>
</dbReference>
<dbReference type="GO" id="GO:0003729">
    <property type="term" value="F:mRNA binding"/>
    <property type="evidence" value="ECO:0007669"/>
    <property type="project" value="TreeGrafter"/>
</dbReference>
<dbReference type="GO" id="GO:0003735">
    <property type="term" value="F:structural constituent of ribosome"/>
    <property type="evidence" value="ECO:0007669"/>
    <property type="project" value="InterPro"/>
</dbReference>
<dbReference type="GO" id="GO:0006412">
    <property type="term" value="P:translation"/>
    <property type="evidence" value="ECO:0007669"/>
    <property type="project" value="UniProtKB-UniRule"/>
</dbReference>
<dbReference type="CDD" id="cd00387">
    <property type="entry name" value="Ribosomal_L7_L12"/>
    <property type="match status" value="1"/>
</dbReference>
<dbReference type="FunFam" id="1.20.5.710:FF:000007">
    <property type="entry name" value="50S ribosomal protein L7/L12"/>
    <property type="match status" value="1"/>
</dbReference>
<dbReference type="FunFam" id="3.30.1390.10:FF:000001">
    <property type="entry name" value="50S ribosomal protein L7/L12"/>
    <property type="match status" value="1"/>
</dbReference>
<dbReference type="Gene3D" id="3.30.1390.10">
    <property type="match status" value="1"/>
</dbReference>
<dbReference type="Gene3D" id="1.20.5.710">
    <property type="entry name" value="Single helix bin"/>
    <property type="match status" value="1"/>
</dbReference>
<dbReference type="HAMAP" id="MF_00368">
    <property type="entry name" value="Ribosomal_bL12"/>
    <property type="match status" value="1"/>
</dbReference>
<dbReference type="InterPro" id="IPR000206">
    <property type="entry name" value="Ribosomal_bL12"/>
</dbReference>
<dbReference type="InterPro" id="IPR013823">
    <property type="entry name" value="Ribosomal_bL12_C"/>
</dbReference>
<dbReference type="InterPro" id="IPR014719">
    <property type="entry name" value="Ribosomal_bL12_C/ClpS-like"/>
</dbReference>
<dbReference type="InterPro" id="IPR008932">
    <property type="entry name" value="Ribosomal_bL12_oligo"/>
</dbReference>
<dbReference type="InterPro" id="IPR036235">
    <property type="entry name" value="Ribosomal_bL12_oligo_N_sf"/>
</dbReference>
<dbReference type="NCBIfam" id="TIGR00855">
    <property type="entry name" value="L12"/>
    <property type="match status" value="1"/>
</dbReference>
<dbReference type="PANTHER" id="PTHR45987">
    <property type="entry name" value="39S RIBOSOMAL PROTEIN L12"/>
    <property type="match status" value="1"/>
</dbReference>
<dbReference type="PANTHER" id="PTHR45987:SF4">
    <property type="entry name" value="LARGE RIBOSOMAL SUBUNIT PROTEIN BL12M"/>
    <property type="match status" value="1"/>
</dbReference>
<dbReference type="Pfam" id="PF00542">
    <property type="entry name" value="Ribosomal_L12"/>
    <property type="match status" value="1"/>
</dbReference>
<dbReference type="Pfam" id="PF16320">
    <property type="entry name" value="Ribosomal_L12_N"/>
    <property type="match status" value="1"/>
</dbReference>
<dbReference type="SUPFAM" id="SSF54736">
    <property type="entry name" value="ClpS-like"/>
    <property type="match status" value="1"/>
</dbReference>
<dbReference type="SUPFAM" id="SSF48300">
    <property type="entry name" value="Ribosomal protein L7/12, oligomerisation (N-terminal) domain"/>
    <property type="match status" value="1"/>
</dbReference>
<gene>
    <name evidence="1" type="primary">rplL</name>
    <name type="ordered locus">Plav_2728</name>
</gene>
<protein>
    <recommendedName>
        <fullName evidence="1">Large ribosomal subunit protein bL12</fullName>
    </recommendedName>
    <alternativeName>
        <fullName evidence="2">50S ribosomal protein L7/L12</fullName>
    </alternativeName>
</protein>
<comment type="function">
    <text evidence="1">Forms part of the ribosomal stalk which helps the ribosome interact with GTP-bound translation factors. Is thus essential for accurate translation.</text>
</comment>
<comment type="subunit">
    <text evidence="1">Homodimer. Part of the ribosomal stalk of the 50S ribosomal subunit. Forms a multimeric L10(L12)X complex, where L10 forms an elongated spine to which 2 to 4 L12 dimers bind in a sequential fashion. Binds GTP-bound translation factors.</text>
</comment>
<comment type="similarity">
    <text evidence="1">Belongs to the bacterial ribosomal protein bL12 family.</text>
</comment>
<reference key="1">
    <citation type="journal article" date="2011" name="Stand. Genomic Sci.">
        <title>Complete genome sequence of Parvibaculum lavamentivorans type strain (DS-1(T)).</title>
        <authorList>
            <person name="Schleheck D."/>
            <person name="Weiss M."/>
            <person name="Pitluck S."/>
            <person name="Bruce D."/>
            <person name="Land M.L."/>
            <person name="Han S."/>
            <person name="Saunders E."/>
            <person name="Tapia R."/>
            <person name="Detter C."/>
            <person name="Brettin T."/>
            <person name="Han J."/>
            <person name="Woyke T."/>
            <person name="Goodwin L."/>
            <person name="Pennacchio L."/>
            <person name="Nolan M."/>
            <person name="Cook A.M."/>
            <person name="Kjelleberg S."/>
            <person name="Thomas T."/>
        </authorList>
    </citation>
    <scope>NUCLEOTIDE SEQUENCE [LARGE SCALE GENOMIC DNA]</scope>
    <source>
        <strain>DS-1 / DSM 13023 / NCIMB 13966</strain>
    </source>
</reference>
<feature type="chain" id="PRO_1000072116" description="Large ribosomal subunit protein bL12">
    <location>
        <begin position="1"/>
        <end position="123"/>
    </location>
</feature>
<name>RL7_PARL1</name>